<sequence>MSVTQYYGTGRRKTSTARVFIKAGSGVITVNDRPLDEYFGRPVARMVVRQPLELVDLVEKFDVNVTVSGGGSFGQAGAIRHGLTRALMEYDENLRSELRKAGYVTRDSREVERKKVGLRKARKRPQYSKR</sequence>
<proteinExistence type="inferred from homology"/>
<protein>
    <recommendedName>
        <fullName evidence="1">Small ribosomal subunit protein uS9</fullName>
    </recommendedName>
    <alternativeName>
        <fullName evidence="3">30S ribosomal protein S9</fullName>
    </alternativeName>
</protein>
<accession>B3PBL9</accession>
<comment type="similarity">
    <text evidence="1">Belongs to the universal ribosomal protein uS9 family.</text>
</comment>
<reference key="1">
    <citation type="journal article" date="2008" name="J. Bacteriol.">
        <title>Insights into plant cell wall degradation from the genome sequence of the soil bacterium Cellvibrio japonicus.</title>
        <authorList>
            <person name="DeBoy R.T."/>
            <person name="Mongodin E.F."/>
            <person name="Fouts D.E."/>
            <person name="Tailford L.E."/>
            <person name="Khouri H."/>
            <person name="Emerson J.B."/>
            <person name="Mohamoud Y."/>
            <person name="Watkins K."/>
            <person name="Henrissat B."/>
            <person name="Gilbert H.J."/>
            <person name="Nelson K.E."/>
        </authorList>
    </citation>
    <scope>NUCLEOTIDE SEQUENCE [LARGE SCALE GENOMIC DNA]</scope>
    <source>
        <strain>Ueda107</strain>
    </source>
</reference>
<feature type="chain" id="PRO_1000128098" description="Small ribosomal subunit protein uS9">
    <location>
        <begin position="1"/>
        <end position="130"/>
    </location>
</feature>
<feature type="region of interest" description="Disordered" evidence="2">
    <location>
        <begin position="108"/>
        <end position="130"/>
    </location>
</feature>
<feature type="compositionally biased region" description="Basic residues" evidence="2">
    <location>
        <begin position="116"/>
        <end position="130"/>
    </location>
</feature>
<organism>
    <name type="scientific">Cellvibrio japonicus (strain Ueda107)</name>
    <name type="common">Pseudomonas fluorescens subsp. cellulosa</name>
    <dbReference type="NCBI Taxonomy" id="498211"/>
    <lineage>
        <taxon>Bacteria</taxon>
        <taxon>Pseudomonadati</taxon>
        <taxon>Pseudomonadota</taxon>
        <taxon>Gammaproteobacteria</taxon>
        <taxon>Cellvibrionales</taxon>
        <taxon>Cellvibrionaceae</taxon>
        <taxon>Cellvibrio</taxon>
    </lineage>
</organism>
<evidence type="ECO:0000255" key="1">
    <source>
        <dbReference type="HAMAP-Rule" id="MF_00532"/>
    </source>
</evidence>
<evidence type="ECO:0000256" key="2">
    <source>
        <dbReference type="SAM" id="MobiDB-lite"/>
    </source>
</evidence>
<evidence type="ECO:0000305" key="3"/>
<name>RS9_CELJU</name>
<dbReference type="EMBL" id="CP000934">
    <property type="protein sequence ID" value="ACE83454.1"/>
    <property type="molecule type" value="Genomic_DNA"/>
</dbReference>
<dbReference type="RefSeq" id="WP_012488380.1">
    <property type="nucleotide sequence ID" value="NC_010995.1"/>
</dbReference>
<dbReference type="SMR" id="B3PBL9"/>
<dbReference type="STRING" id="498211.CJA_2786"/>
<dbReference type="KEGG" id="cja:CJA_2786"/>
<dbReference type="eggNOG" id="COG0103">
    <property type="taxonomic scope" value="Bacteria"/>
</dbReference>
<dbReference type="HOGENOM" id="CLU_046483_2_1_6"/>
<dbReference type="OrthoDB" id="9803965at2"/>
<dbReference type="Proteomes" id="UP000001036">
    <property type="component" value="Chromosome"/>
</dbReference>
<dbReference type="GO" id="GO:0022627">
    <property type="term" value="C:cytosolic small ribosomal subunit"/>
    <property type="evidence" value="ECO:0007669"/>
    <property type="project" value="TreeGrafter"/>
</dbReference>
<dbReference type="GO" id="GO:0003723">
    <property type="term" value="F:RNA binding"/>
    <property type="evidence" value="ECO:0007669"/>
    <property type="project" value="TreeGrafter"/>
</dbReference>
<dbReference type="GO" id="GO:0003735">
    <property type="term" value="F:structural constituent of ribosome"/>
    <property type="evidence" value="ECO:0007669"/>
    <property type="project" value="InterPro"/>
</dbReference>
<dbReference type="GO" id="GO:0006412">
    <property type="term" value="P:translation"/>
    <property type="evidence" value="ECO:0007669"/>
    <property type="project" value="UniProtKB-UniRule"/>
</dbReference>
<dbReference type="FunFam" id="3.30.230.10:FF:000001">
    <property type="entry name" value="30S ribosomal protein S9"/>
    <property type="match status" value="1"/>
</dbReference>
<dbReference type="Gene3D" id="3.30.230.10">
    <property type="match status" value="1"/>
</dbReference>
<dbReference type="HAMAP" id="MF_00532_B">
    <property type="entry name" value="Ribosomal_uS9_B"/>
    <property type="match status" value="1"/>
</dbReference>
<dbReference type="InterPro" id="IPR020568">
    <property type="entry name" value="Ribosomal_Su5_D2-typ_SF"/>
</dbReference>
<dbReference type="InterPro" id="IPR000754">
    <property type="entry name" value="Ribosomal_uS9"/>
</dbReference>
<dbReference type="InterPro" id="IPR023035">
    <property type="entry name" value="Ribosomal_uS9_bac/plastid"/>
</dbReference>
<dbReference type="InterPro" id="IPR020574">
    <property type="entry name" value="Ribosomal_uS9_CS"/>
</dbReference>
<dbReference type="InterPro" id="IPR014721">
    <property type="entry name" value="Ribsml_uS5_D2-typ_fold_subgr"/>
</dbReference>
<dbReference type="NCBIfam" id="NF001099">
    <property type="entry name" value="PRK00132.1"/>
    <property type="match status" value="1"/>
</dbReference>
<dbReference type="PANTHER" id="PTHR21569">
    <property type="entry name" value="RIBOSOMAL PROTEIN S9"/>
    <property type="match status" value="1"/>
</dbReference>
<dbReference type="PANTHER" id="PTHR21569:SF1">
    <property type="entry name" value="SMALL RIBOSOMAL SUBUNIT PROTEIN US9M"/>
    <property type="match status" value="1"/>
</dbReference>
<dbReference type="Pfam" id="PF00380">
    <property type="entry name" value="Ribosomal_S9"/>
    <property type="match status" value="1"/>
</dbReference>
<dbReference type="SUPFAM" id="SSF54211">
    <property type="entry name" value="Ribosomal protein S5 domain 2-like"/>
    <property type="match status" value="1"/>
</dbReference>
<dbReference type="PROSITE" id="PS00360">
    <property type="entry name" value="RIBOSOMAL_S9"/>
    <property type="match status" value="1"/>
</dbReference>
<keyword id="KW-1185">Reference proteome</keyword>
<keyword id="KW-0687">Ribonucleoprotein</keyword>
<keyword id="KW-0689">Ribosomal protein</keyword>
<gene>
    <name evidence="1" type="primary">rpsI</name>
    <name type="ordered locus">CJA_2786</name>
</gene>